<comment type="function">
    <text evidence="1">Probable transcription factor.</text>
</comment>
<comment type="subcellular location">
    <subcellularLocation>
        <location evidence="5">Nucleus</location>
    </subcellularLocation>
</comment>
<comment type="tissue specificity">
    <text evidence="4">Expressed in seedlings, roots, stems and panicles.</text>
</comment>
<comment type="similarity">
    <text evidence="5">Belongs to the HD-ZIP homeobox family. Class II subfamily.</text>
</comment>
<sequence>MERQGLDLGLSLGLGLTTAATWPAAGFCLNSGMAEQEVIRRDDVVAATAAEDERFACSPGSPVSSGSGKRGSGSGSGDEVDDAGCDVGGGGARKKLRLSKDQAAVLEECFKTHHTLTPKQKVALAKSLNLRPRQVEVWFQNRRARTKLKQTEVDCEHLKRWCDQLADDNRRLHKELAELRALKATPTPPAAAPPLTTLTMCLSCKRVANAGVPSPAAAIFPGHPQFLCGFRDHAGAASSSYGGASSGLAKAVRAAR</sequence>
<feature type="chain" id="PRO_0000331728" description="Homeobox-leucine zipper protein HOX28">
    <location>
        <begin position="1"/>
        <end position="256"/>
    </location>
</feature>
<feature type="DNA-binding region" description="Homeobox" evidence="2">
    <location>
        <begin position="91"/>
        <end position="150"/>
    </location>
</feature>
<feature type="region of interest" description="Disordered" evidence="3">
    <location>
        <begin position="56"/>
        <end position="86"/>
    </location>
</feature>
<feature type="region of interest" description="Leucine-zipper">
    <location>
        <begin position="149"/>
        <end position="193"/>
    </location>
</feature>
<feature type="compositionally biased region" description="Low complexity" evidence="3">
    <location>
        <begin position="58"/>
        <end position="67"/>
    </location>
</feature>
<evidence type="ECO:0000250" key="1"/>
<evidence type="ECO:0000255" key="2">
    <source>
        <dbReference type="PROSITE-ProRule" id="PRU00108"/>
    </source>
</evidence>
<evidence type="ECO:0000256" key="3">
    <source>
        <dbReference type="SAM" id="MobiDB-lite"/>
    </source>
</evidence>
<evidence type="ECO:0000269" key="4">
    <source>
    </source>
</evidence>
<evidence type="ECO:0000305" key="5"/>
<gene>
    <name type="primary">HOX28</name>
    <name type="ordered locus">Os06g0140400</name>
    <name type="ordered locus">LOC_Os06g04850</name>
    <name type="ORF">OsJ_019259</name>
    <name type="ORF">OSJNBa0041F13.45</name>
</gene>
<keyword id="KW-0238">DNA-binding</keyword>
<keyword id="KW-0371">Homeobox</keyword>
<keyword id="KW-0539">Nucleus</keyword>
<keyword id="KW-1185">Reference proteome</keyword>
<keyword id="KW-0804">Transcription</keyword>
<keyword id="KW-0805">Transcription regulation</keyword>
<protein>
    <recommendedName>
        <fullName>Homeobox-leucine zipper protein HOX28</fullName>
    </recommendedName>
    <alternativeName>
        <fullName>HD-ZIP protein HOX28</fullName>
    </alternativeName>
    <alternativeName>
        <fullName>Homeodomain transcription factor HOX28</fullName>
    </alternativeName>
    <alternativeName>
        <fullName>OsHox28</fullName>
    </alternativeName>
</protein>
<proteinExistence type="evidence at transcript level"/>
<accession>Q5VPE5</accession>
<accession>A3B887</accession>
<accession>Q6Q7D9</accession>
<organism>
    <name type="scientific">Oryza sativa subsp. japonica</name>
    <name type="common">Rice</name>
    <dbReference type="NCBI Taxonomy" id="39947"/>
    <lineage>
        <taxon>Eukaryota</taxon>
        <taxon>Viridiplantae</taxon>
        <taxon>Streptophyta</taxon>
        <taxon>Embryophyta</taxon>
        <taxon>Tracheophyta</taxon>
        <taxon>Spermatophyta</taxon>
        <taxon>Magnoliopsida</taxon>
        <taxon>Liliopsida</taxon>
        <taxon>Poales</taxon>
        <taxon>Poaceae</taxon>
        <taxon>BOP clade</taxon>
        <taxon>Oryzoideae</taxon>
        <taxon>Oryzeae</taxon>
        <taxon>Oryzinae</taxon>
        <taxon>Oryza</taxon>
        <taxon>Oryza sativa</taxon>
    </lineage>
</organism>
<name>HOX28_ORYSJ</name>
<dbReference type="EMBL" id="AP003708">
    <property type="protein sequence ID" value="BAD68680.1"/>
    <property type="molecule type" value="Genomic_DNA"/>
</dbReference>
<dbReference type="EMBL" id="AP008212">
    <property type="protein sequence ID" value="BAF18666.1"/>
    <property type="molecule type" value="Genomic_DNA"/>
</dbReference>
<dbReference type="EMBL" id="AP014962">
    <property type="protein sequence ID" value="BAS96076.1"/>
    <property type="molecule type" value="Genomic_DNA"/>
</dbReference>
<dbReference type="EMBL" id="CM000143">
    <property type="status" value="NOT_ANNOTATED_CDS"/>
    <property type="molecule type" value="Genomic_DNA"/>
</dbReference>
<dbReference type="EMBL" id="AK059116">
    <property type="status" value="NOT_ANNOTATED_CDS"/>
    <property type="molecule type" value="mRNA"/>
</dbReference>
<dbReference type="EMBL" id="AY554033">
    <property type="protein sequence ID" value="AAS83421.1"/>
    <property type="molecule type" value="mRNA"/>
</dbReference>
<dbReference type="RefSeq" id="XP_015642539.1">
    <property type="nucleotide sequence ID" value="XM_015787053.1"/>
</dbReference>
<dbReference type="SMR" id="Q5VPE5"/>
<dbReference type="FunCoup" id="Q5VPE5">
    <property type="interactions" value="10"/>
</dbReference>
<dbReference type="STRING" id="39947.Q5VPE5"/>
<dbReference type="PaxDb" id="39947-Q5VPE5"/>
<dbReference type="EnsemblPlants" id="Os06t0140400-01">
    <property type="protein sequence ID" value="Os06t0140400-01"/>
    <property type="gene ID" value="Os06g0140400"/>
</dbReference>
<dbReference type="EnsemblPlants" id="Os06t0140400-02">
    <property type="protein sequence ID" value="Os06t0140400-02"/>
    <property type="gene ID" value="Os06g0140400"/>
</dbReference>
<dbReference type="Gramene" id="Os06t0140400-01">
    <property type="protein sequence ID" value="Os06t0140400-01"/>
    <property type="gene ID" value="Os06g0140400"/>
</dbReference>
<dbReference type="Gramene" id="Os06t0140400-02">
    <property type="protein sequence ID" value="Os06t0140400-02"/>
    <property type="gene ID" value="Os06g0140400"/>
</dbReference>
<dbReference type="KEGG" id="dosa:Os06g0140400"/>
<dbReference type="eggNOG" id="KOG0483">
    <property type="taxonomic scope" value="Eukaryota"/>
</dbReference>
<dbReference type="HOGENOM" id="CLU_049516_4_0_1"/>
<dbReference type="InParanoid" id="Q5VPE5"/>
<dbReference type="OMA" id="AMFPGHP"/>
<dbReference type="OrthoDB" id="6159439at2759"/>
<dbReference type="Proteomes" id="UP000000763">
    <property type="component" value="Chromosome 6"/>
</dbReference>
<dbReference type="Proteomes" id="UP000007752">
    <property type="component" value="Chromosome 6"/>
</dbReference>
<dbReference type="Proteomes" id="UP000059680">
    <property type="component" value="Chromosome 6"/>
</dbReference>
<dbReference type="ExpressionAtlas" id="Q5VPE5">
    <property type="expression patterns" value="baseline and differential"/>
</dbReference>
<dbReference type="GO" id="GO:0005634">
    <property type="term" value="C:nucleus"/>
    <property type="evidence" value="ECO:0007669"/>
    <property type="project" value="UniProtKB-SubCell"/>
</dbReference>
<dbReference type="GO" id="GO:0000981">
    <property type="term" value="F:DNA-binding transcription factor activity, RNA polymerase II-specific"/>
    <property type="evidence" value="ECO:0007669"/>
    <property type="project" value="InterPro"/>
</dbReference>
<dbReference type="GO" id="GO:0043565">
    <property type="term" value="F:sequence-specific DNA binding"/>
    <property type="evidence" value="ECO:0007669"/>
    <property type="project" value="InterPro"/>
</dbReference>
<dbReference type="CDD" id="cd00086">
    <property type="entry name" value="homeodomain"/>
    <property type="match status" value="1"/>
</dbReference>
<dbReference type="FunFam" id="1.10.10.60:FF:000577">
    <property type="entry name" value="Homeobox-leucine zipper protein 18"/>
    <property type="match status" value="1"/>
</dbReference>
<dbReference type="Gene3D" id="1.10.10.60">
    <property type="entry name" value="Homeodomain-like"/>
    <property type="match status" value="1"/>
</dbReference>
<dbReference type="InterPro" id="IPR001356">
    <property type="entry name" value="HD"/>
</dbReference>
<dbReference type="InterPro" id="IPR050762">
    <property type="entry name" value="HD-ZIP_Homeobox_LZ_Class_II"/>
</dbReference>
<dbReference type="InterPro" id="IPR017970">
    <property type="entry name" value="Homeobox_CS"/>
</dbReference>
<dbReference type="InterPro" id="IPR009057">
    <property type="entry name" value="Homeodomain-like_sf"/>
</dbReference>
<dbReference type="InterPro" id="IPR003106">
    <property type="entry name" value="Leu_zip_homeo"/>
</dbReference>
<dbReference type="PANTHER" id="PTHR45714">
    <property type="entry name" value="HOMEOBOX-LEUCINE ZIPPER PROTEIN HAT14"/>
    <property type="match status" value="1"/>
</dbReference>
<dbReference type="PANTHER" id="PTHR45714:SF18">
    <property type="entry name" value="HOMEOBOX-LEUCINE ZIPPER PROTEIN HOX28"/>
    <property type="match status" value="1"/>
</dbReference>
<dbReference type="Pfam" id="PF02183">
    <property type="entry name" value="HALZ"/>
    <property type="match status" value="1"/>
</dbReference>
<dbReference type="Pfam" id="PF00046">
    <property type="entry name" value="Homeodomain"/>
    <property type="match status" value="1"/>
</dbReference>
<dbReference type="SMART" id="SM00340">
    <property type="entry name" value="HALZ"/>
    <property type="match status" value="1"/>
</dbReference>
<dbReference type="SMART" id="SM00389">
    <property type="entry name" value="HOX"/>
    <property type="match status" value="1"/>
</dbReference>
<dbReference type="SUPFAM" id="SSF46689">
    <property type="entry name" value="Homeodomain-like"/>
    <property type="match status" value="1"/>
</dbReference>
<dbReference type="PROSITE" id="PS00027">
    <property type="entry name" value="HOMEOBOX_1"/>
    <property type="match status" value="1"/>
</dbReference>
<dbReference type="PROSITE" id="PS50071">
    <property type="entry name" value="HOMEOBOX_2"/>
    <property type="match status" value="1"/>
</dbReference>
<reference key="1">
    <citation type="journal article" date="2005" name="Nature">
        <title>The map-based sequence of the rice genome.</title>
        <authorList>
            <consortium name="International rice genome sequencing project (IRGSP)"/>
        </authorList>
    </citation>
    <scope>NUCLEOTIDE SEQUENCE [LARGE SCALE GENOMIC DNA]</scope>
    <source>
        <strain>cv. Nipponbare</strain>
    </source>
</reference>
<reference key="2">
    <citation type="journal article" date="2008" name="Nucleic Acids Res.">
        <title>The rice annotation project database (RAP-DB): 2008 update.</title>
        <authorList>
            <consortium name="The rice annotation project (RAP)"/>
        </authorList>
    </citation>
    <scope>GENOME REANNOTATION</scope>
    <source>
        <strain>cv. Nipponbare</strain>
    </source>
</reference>
<reference key="3">
    <citation type="journal article" date="2013" name="Rice">
        <title>Improvement of the Oryza sativa Nipponbare reference genome using next generation sequence and optical map data.</title>
        <authorList>
            <person name="Kawahara Y."/>
            <person name="de la Bastide M."/>
            <person name="Hamilton J.P."/>
            <person name="Kanamori H."/>
            <person name="McCombie W.R."/>
            <person name="Ouyang S."/>
            <person name="Schwartz D.C."/>
            <person name="Tanaka T."/>
            <person name="Wu J."/>
            <person name="Zhou S."/>
            <person name="Childs K.L."/>
            <person name="Davidson R.M."/>
            <person name="Lin H."/>
            <person name="Quesada-Ocampo L."/>
            <person name="Vaillancourt B."/>
            <person name="Sakai H."/>
            <person name="Lee S.S."/>
            <person name="Kim J."/>
            <person name="Numa H."/>
            <person name="Itoh T."/>
            <person name="Buell C.R."/>
            <person name="Matsumoto T."/>
        </authorList>
    </citation>
    <scope>GENOME REANNOTATION</scope>
    <source>
        <strain>cv. Nipponbare</strain>
    </source>
</reference>
<reference key="4">
    <citation type="journal article" date="2005" name="PLoS Biol.">
        <title>The genomes of Oryza sativa: a history of duplications.</title>
        <authorList>
            <person name="Yu J."/>
            <person name="Wang J."/>
            <person name="Lin W."/>
            <person name="Li S."/>
            <person name="Li H."/>
            <person name="Zhou J."/>
            <person name="Ni P."/>
            <person name="Dong W."/>
            <person name="Hu S."/>
            <person name="Zeng C."/>
            <person name="Zhang J."/>
            <person name="Zhang Y."/>
            <person name="Li R."/>
            <person name="Xu Z."/>
            <person name="Li S."/>
            <person name="Li X."/>
            <person name="Zheng H."/>
            <person name="Cong L."/>
            <person name="Lin L."/>
            <person name="Yin J."/>
            <person name="Geng J."/>
            <person name="Li G."/>
            <person name="Shi J."/>
            <person name="Liu J."/>
            <person name="Lv H."/>
            <person name="Li J."/>
            <person name="Wang J."/>
            <person name="Deng Y."/>
            <person name="Ran L."/>
            <person name="Shi X."/>
            <person name="Wang X."/>
            <person name="Wu Q."/>
            <person name="Li C."/>
            <person name="Ren X."/>
            <person name="Wang J."/>
            <person name="Wang X."/>
            <person name="Li D."/>
            <person name="Liu D."/>
            <person name="Zhang X."/>
            <person name="Ji Z."/>
            <person name="Zhao W."/>
            <person name="Sun Y."/>
            <person name="Zhang Z."/>
            <person name="Bao J."/>
            <person name="Han Y."/>
            <person name="Dong L."/>
            <person name="Ji J."/>
            <person name="Chen P."/>
            <person name="Wu S."/>
            <person name="Liu J."/>
            <person name="Xiao Y."/>
            <person name="Bu D."/>
            <person name="Tan J."/>
            <person name="Yang L."/>
            <person name="Ye C."/>
            <person name="Zhang J."/>
            <person name="Xu J."/>
            <person name="Zhou Y."/>
            <person name="Yu Y."/>
            <person name="Zhang B."/>
            <person name="Zhuang S."/>
            <person name="Wei H."/>
            <person name="Liu B."/>
            <person name="Lei M."/>
            <person name="Yu H."/>
            <person name="Li Y."/>
            <person name="Xu H."/>
            <person name="Wei S."/>
            <person name="He X."/>
            <person name="Fang L."/>
            <person name="Zhang Z."/>
            <person name="Zhang Y."/>
            <person name="Huang X."/>
            <person name="Su Z."/>
            <person name="Tong W."/>
            <person name="Li J."/>
            <person name="Tong Z."/>
            <person name="Li S."/>
            <person name="Ye J."/>
            <person name="Wang L."/>
            <person name="Fang L."/>
            <person name="Lei T."/>
            <person name="Chen C.-S."/>
            <person name="Chen H.-C."/>
            <person name="Xu Z."/>
            <person name="Li H."/>
            <person name="Huang H."/>
            <person name="Zhang F."/>
            <person name="Xu H."/>
            <person name="Li N."/>
            <person name="Zhao C."/>
            <person name="Li S."/>
            <person name="Dong L."/>
            <person name="Huang Y."/>
            <person name="Li L."/>
            <person name="Xi Y."/>
            <person name="Qi Q."/>
            <person name="Li W."/>
            <person name="Zhang B."/>
            <person name="Hu W."/>
            <person name="Zhang Y."/>
            <person name="Tian X."/>
            <person name="Jiao Y."/>
            <person name="Liang X."/>
            <person name="Jin J."/>
            <person name="Gao L."/>
            <person name="Zheng W."/>
            <person name="Hao B."/>
            <person name="Liu S.-M."/>
            <person name="Wang W."/>
            <person name="Yuan L."/>
            <person name="Cao M."/>
            <person name="McDermott J."/>
            <person name="Samudrala R."/>
            <person name="Wang J."/>
            <person name="Wong G.K.-S."/>
            <person name="Yang H."/>
        </authorList>
    </citation>
    <scope>NUCLEOTIDE SEQUENCE [LARGE SCALE GENOMIC DNA]</scope>
    <source>
        <strain>cv. Nipponbare</strain>
    </source>
</reference>
<reference key="5">
    <citation type="journal article" date="2003" name="Science">
        <title>Collection, mapping, and annotation of over 28,000 cDNA clones from japonica rice.</title>
        <authorList>
            <consortium name="The rice full-length cDNA consortium"/>
        </authorList>
    </citation>
    <scope>NUCLEOTIDE SEQUENCE [LARGE SCALE MRNA]</scope>
    <source>
        <strain>cv. Nipponbare</strain>
    </source>
</reference>
<reference key="6">
    <citation type="journal article" date="2008" name="Plant Mol. Biol.">
        <title>A genome-wide survey of HD-Zip genes in rice and analysis of drought-responsive family members.</title>
        <authorList>
            <person name="Agalou A."/>
            <person name="Purwantomo S."/>
            <person name="Oevernaes E."/>
            <person name="Johannesson H."/>
            <person name="Zhu X."/>
            <person name="Estiati A."/>
            <person name="de Kam R.J."/>
            <person name="Engstroem P."/>
            <person name="Slamet-Loedin I.H."/>
            <person name="Zhu Z."/>
            <person name="Wang M."/>
            <person name="Xiong L."/>
            <person name="Meijer A.H."/>
            <person name="Ouwerkerk P.B.F."/>
        </authorList>
    </citation>
    <scope>NUCLEOTIDE SEQUENCE [MRNA] OF 1-132</scope>
    <scope>TISSUE SPECIFICITY</scope>
    <scope>GENE FAMILY</scope>
    <scope>NOMENCLATURE</scope>
    <source>
        <strain>cv. Nipponbare</strain>
    </source>
</reference>